<proteinExistence type="evidence at protein level"/>
<protein>
    <recommendedName>
        <fullName>Ig heavy chain V region GOM</fullName>
    </recommendedName>
</protein>
<reference key="1">
    <citation type="journal article" date="1977" name="Biochemistry">
        <title>Primary structure of the variable regions of two canine immunoglobulin heavy chains.</title>
        <authorList>
            <person name="Wasserman R.L."/>
            <person name="Capra J.D."/>
        </authorList>
    </citation>
    <scope>PROTEIN SEQUENCE</scope>
</reference>
<keyword id="KW-1064">Adaptive immunity</keyword>
<keyword id="KW-0903">Direct protein sequencing</keyword>
<keyword id="KW-0391">Immunity</keyword>
<keyword id="KW-1280">Immunoglobulin</keyword>
<keyword id="KW-1185">Reference proteome</keyword>
<comment type="miscellaneous">
    <text>This chain was isolated from a myeloma protein.</text>
</comment>
<accession>P01784</accession>
<feature type="chain" id="PRO_0000059856" description="Ig heavy chain V region GOM">
    <location>
        <begin position="1"/>
        <end position="114" status="greater than"/>
    </location>
</feature>
<feature type="domain" description="Ig-like">
    <location>
        <begin position="1"/>
        <end position="112"/>
    </location>
</feature>
<feature type="non-terminal residue">
    <location>
        <position position="114"/>
    </location>
</feature>
<dbReference type="PIR" id="A02067">
    <property type="entry name" value="AVDGGM"/>
</dbReference>
<dbReference type="SMR" id="P01784"/>
<dbReference type="FunCoup" id="P01784">
    <property type="interactions" value="20"/>
</dbReference>
<dbReference type="STRING" id="9615.ENSCAFP00000051937"/>
<dbReference type="InParanoid" id="P01784"/>
<dbReference type="Proteomes" id="UP000002254">
    <property type="component" value="Unplaced"/>
</dbReference>
<dbReference type="Proteomes" id="UP000694429">
    <property type="component" value="Unplaced"/>
</dbReference>
<dbReference type="Proteomes" id="UP000694542">
    <property type="component" value="Unplaced"/>
</dbReference>
<dbReference type="Proteomes" id="UP000805418">
    <property type="component" value="Unplaced"/>
</dbReference>
<dbReference type="GO" id="GO:0005576">
    <property type="term" value="C:extracellular region"/>
    <property type="evidence" value="ECO:0007669"/>
    <property type="project" value="UniProtKB-ARBA"/>
</dbReference>
<dbReference type="GO" id="GO:0019814">
    <property type="term" value="C:immunoglobulin complex"/>
    <property type="evidence" value="ECO:0007669"/>
    <property type="project" value="UniProtKB-KW"/>
</dbReference>
<dbReference type="GO" id="GO:0003823">
    <property type="term" value="F:antigen binding"/>
    <property type="evidence" value="ECO:0000318"/>
    <property type="project" value="GO_Central"/>
</dbReference>
<dbReference type="GO" id="GO:0016064">
    <property type="term" value="P:immunoglobulin mediated immune response"/>
    <property type="evidence" value="ECO:0000318"/>
    <property type="project" value="GO_Central"/>
</dbReference>
<dbReference type="FunFam" id="2.60.40.10:FF:001259">
    <property type="entry name" value="Immunoglobulin heavy variable 13-2"/>
    <property type="match status" value="1"/>
</dbReference>
<dbReference type="Gene3D" id="2.60.40.10">
    <property type="entry name" value="Immunoglobulins"/>
    <property type="match status" value="1"/>
</dbReference>
<dbReference type="InterPro" id="IPR007110">
    <property type="entry name" value="Ig-like_dom"/>
</dbReference>
<dbReference type="InterPro" id="IPR036179">
    <property type="entry name" value="Ig-like_dom_sf"/>
</dbReference>
<dbReference type="InterPro" id="IPR013783">
    <property type="entry name" value="Ig-like_fold"/>
</dbReference>
<dbReference type="InterPro" id="IPR003599">
    <property type="entry name" value="Ig_sub"/>
</dbReference>
<dbReference type="InterPro" id="IPR013106">
    <property type="entry name" value="Ig_V-set"/>
</dbReference>
<dbReference type="InterPro" id="IPR050199">
    <property type="entry name" value="IgHV"/>
</dbReference>
<dbReference type="PANTHER" id="PTHR23266">
    <property type="entry name" value="IMMUNOGLOBULIN HEAVY CHAIN"/>
    <property type="match status" value="1"/>
</dbReference>
<dbReference type="Pfam" id="PF07686">
    <property type="entry name" value="V-set"/>
    <property type="match status" value="1"/>
</dbReference>
<dbReference type="SMART" id="SM00409">
    <property type="entry name" value="IG"/>
    <property type="match status" value="1"/>
</dbReference>
<dbReference type="SMART" id="SM00406">
    <property type="entry name" value="IGv"/>
    <property type="match status" value="1"/>
</dbReference>
<dbReference type="SUPFAM" id="SSF48726">
    <property type="entry name" value="Immunoglobulin"/>
    <property type="match status" value="1"/>
</dbReference>
<dbReference type="PROSITE" id="PS50835">
    <property type="entry name" value="IG_LIKE"/>
    <property type="match status" value="1"/>
</dbReference>
<organism>
    <name type="scientific">Canis lupus familiaris</name>
    <name type="common">Dog</name>
    <name type="synonym">Canis familiaris</name>
    <dbReference type="NCBI Taxonomy" id="9615"/>
    <lineage>
        <taxon>Eukaryota</taxon>
        <taxon>Metazoa</taxon>
        <taxon>Chordata</taxon>
        <taxon>Craniata</taxon>
        <taxon>Vertebrata</taxon>
        <taxon>Euteleostomi</taxon>
        <taxon>Mammalia</taxon>
        <taxon>Eutheria</taxon>
        <taxon>Laurasiatheria</taxon>
        <taxon>Carnivora</taxon>
        <taxon>Caniformia</taxon>
        <taxon>Canidae</taxon>
        <taxon>Canis</taxon>
    </lineage>
</organism>
<sequence length="114" mass="12430">EVQLVESGGDLVKPGGSLRLSCVASGITFSGYDMQWVRQAPGKGLQKVAYFNDALSAQGYADAVKGRFTISKDNAKDSLYLQMNSLRAEDTAVYYCAPWQFEYWGQGTLVTVSS</sequence>
<name>HV01_CANLF</name>